<organism>
    <name type="scientific">Brucella abortus (strain S19)</name>
    <dbReference type="NCBI Taxonomy" id="430066"/>
    <lineage>
        <taxon>Bacteria</taxon>
        <taxon>Pseudomonadati</taxon>
        <taxon>Pseudomonadota</taxon>
        <taxon>Alphaproteobacteria</taxon>
        <taxon>Hyphomicrobiales</taxon>
        <taxon>Brucellaceae</taxon>
        <taxon>Brucella/Ochrobactrum group</taxon>
        <taxon>Brucella</taxon>
    </lineage>
</organism>
<name>CH10_BRUA1</name>
<protein>
    <recommendedName>
        <fullName evidence="1">Co-chaperonin GroES</fullName>
    </recommendedName>
    <alternativeName>
        <fullName evidence="1">10 kDa chaperonin</fullName>
    </alternativeName>
    <alternativeName>
        <fullName evidence="1">Chaperonin-10</fullName>
        <shortName evidence="1">Cpn10</shortName>
    </alternativeName>
</protein>
<keyword id="KW-0143">Chaperone</keyword>
<keyword id="KW-0963">Cytoplasm</keyword>
<keyword id="KW-0346">Stress response</keyword>
<accession>B2SCZ5</accession>
<accession>P0A344</accession>
<accession>P25968</accession>
<accession>Q579P9</accession>
<feature type="chain" id="PRO_1000129631" description="Co-chaperonin GroES">
    <location>
        <begin position="1"/>
        <end position="98"/>
    </location>
</feature>
<gene>
    <name evidence="1" type="primary">groES</name>
    <name evidence="1" type="synonym">groS</name>
    <name type="ordered locus">BAbS19_II01800</name>
</gene>
<evidence type="ECO:0000255" key="1">
    <source>
        <dbReference type="HAMAP-Rule" id="MF_00580"/>
    </source>
</evidence>
<evidence type="ECO:0000269" key="2">
    <source>
    </source>
</evidence>
<reference key="1">
    <citation type="journal article" date="1992" name="Biochim. Biophys. Acta">
        <title>Cloning and nucleotide sequence of the Brucella abortus groE operon.</title>
        <authorList>
            <person name="Gor D."/>
            <person name="Mayfield J.E."/>
        </authorList>
    </citation>
    <scope>NUCLEOTIDE SEQUENCE [GENOMIC DNA]</scope>
</reference>
<reference key="2">
    <citation type="journal article" date="1992" name="Infect. Immun.">
        <title>Characterization of the heat shock response in Brucella abortus and isolation of the genes encoding the GroE heat shock proteins.</title>
        <authorList>
            <person name="Lin J."/>
            <person name="Adams L.G."/>
            <person name="Ficht T.A."/>
        </authorList>
    </citation>
    <scope>NUCLEOTIDE SEQUENCE [GENOMIC DNA]</scope>
    <scope>INDUCTION</scope>
</reference>
<reference key="3">
    <citation type="journal article" date="2008" name="PLoS ONE">
        <title>Genome sequence of Brucella abortus vaccine strain S19 compared to virulent strains yields candidate virulence genes.</title>
        <authorList>
            <person name="Crasta O.R."/>
            <person name="Folkerts O."/>
            <person name="Fei Z."/>
            <person name="Mane S.P."/>
            <person name="Evans C."/>
            <person name="Martino-Catt S."/>
            <person name="Bricker B."/>
            <person name="Yu G."/>
            <person name="Du L."/>
            <person name="Sobral B.W."/>
        </authorList>
    </citation>
    <scope>NUCLEOTIDE SEQUENCE [LARGE SCALE GENOMIC DNA]</scope>
    <source>
        <strain>S19</strain>
    </source>
</reference>
<comment type="function">
    <text evidence="1">Together with the chaperonin GroEL, plays an essential role in assisting protein folding. The GroEL-GroES system forms a nano-cage that allows encapsulation of the non-native substrate proteins and provides a physical environment optimized to promote and accelerate protein folding. GroES binds to the apical surface of the GroEL ring, thereby capping the opening of the GroEL channel.</text>
</comment>
<comment type="subunit">
    <text evidence="1">Heptamer of 7 subunits arranged in a ring. Interacts with the chaperonin GroEL.</text>
</comment>
<comment type="subcellular location">
    <subcellularLocation>
        <location evidence="1">Cytoplasm</location>
    </subcellularLocation>
</comment>
<comment type="induction">
    <text evidence="2">By heat shock.</text>
</comment>
<comment type="similarity">
    <text evidence="1">Belongs to the GroES chaperonin family.</text>
</comment>
<dbReference type="EMBL" id="M82975">
    <property type="protein sequence ID" value="AAA22996.1"/>
    <property type="molecule type" value="Genomic_DNA"/>
</dbReference>
<dbReference type="EMBL" id="M83930">
    <property type="protein sequence ID" value="AAA22994.1"/>
    <property type="molecule type" value="Genomic_DNA"/>
</dbReference>
<dbReference type="EMBL" id="CP000888">
    <property type="protein sequence ID" value="ACD73699.1"/>
    <property type="molecule type" value="Genomic_DNA"/>
</dbReference>
<dbReference type="PIR" id="A43827">
    <property type="entry name" value="A43827"/>
</dbReference>
<dbReference type="RefSeq" id="WP_002966386.1">
    <property type="nucleotide sequence ID" value="NC_010740.1"/>
</dbReference>
<dbReference type="SMR" id="B2SCZ5"/>
<dbReference type="GeneID" id="97535613"/>
<dbReference type="KEGG" id="bmc:BAbS19_II01800"/>
<dbReference type="HOGENOM" id="CLU_132825_1_0_5"/>
<dbReference type="Proteomes" id="UP000002565">
    <property type="component" value="Chromosome 2"/>
</dbReference>
<dbReference type="GO" id="GO:0005737">
    <property type="term" value="C:cytoplasm"/>
    <property type="evidence" value="ECO:0007669"/>
    <property type="project" value="UniProtKB-SubCell"/>
</dbReference>
<dbReference type="GO" id="GO:0005524">
    <property type="term" value="F:ATP binding"/>
    <property type="evidence" value="ECO:0007669"/>
    <property type="project" value="InterPro"/>
</dbReference>
<dbReference type="GO" id="GO:0046872">
    <property type="term" value="F:metal ion binding"/>
    <property type="evidence" value="ECO:0007669"/>
    <property type="project" value="TreeGrafter"/>
</dbReference>
<dbReference type="GO" id="GO:0044183">
    <property type="term" value="F:protein folding chaperone"/>
    <property type="evidence" value="ECO:0007669"/>
    <property type="project" value="InterPro"/>
</dbReference>
<dbReference type="GO" id="GO:0051087">
    <property type="term" value="F:protein-folding chaperone binding"/>
    <property type="evidence" value="ECO:0007669"/>
    <property type="project" value="TreeGrafter"/>
</dbReference>
<dbReference type="GO" id="GO:0051082">
    <property type="term" value="F:unfolded protein binding"/>
    <property type="evidence" value="ECO:0007669"/>
    <property type="project" value="TreeGrafter"/>
</dbReference>
<dbReference type="GO" id="GO:0051085">
    <property type="term" value="P:chaperone cofactor-dependent protein refolding"/>
    <property type="evidence" value="ECO:0007669"/>
    <property type="project" value="TreeGrafter"/>
</dbReference>
<dbReference type="CDD" id="cd00320">
    <property type="entry name" value="cpn10"/>
    <property type="match status" value="1"/>
</dbReference>
<dbReference type="FunFam" id="2.30.33.40:FF:000001">
    <property type="entry name" value="10 kDa chaperonin"/>
    <property type="match status" value="1"/>
</dbReference>
<dbReference type="Gene3D" id="2.30.33.40">
    <property type="entry name" value="GroES chaperonin"/>
    <property type="match status" value="1"/>
</dbReference>
<dbReference type="HAMAP" id="MF_00580">
    <property type="entry name" value="CH10"/>
    <property type="match status" value="1"/>
</dbReference>
<dbReference type="InterPro" id="IPR020818">
    <property type="entry name" value="Chaperonin_GroES"/>
</dbReference>
<dbReference type="InterPro" id="IPR037124">
    <property type="entry name" value="Chaperonin_GroES_sf"/>
</dbReference>
<dbReference type="InterPro" id="IPR018369">
    <property type="entry name" value="Chaprnonin_Cpn10_CS"/>
</dbReference>
<dbReference type="InterPro" id="IPR011032">
    <property type="entry name" value="GroES-like_sf"/>
</dbReference>
<dbReference type="NCBIfam" id="NF001527">
    <property type="entry name" value="PRK00364.1-2"/>
    <property type="match status" value="1"/>
</dbReference>
<dbReference type="NCBIfam" id="NF001529">
    <property type="entry name" value="PRK00364.1-5"/>
    <property type="match status" value="1"/>
</dbReference>
<dbReference type="NCBIfam" id="NF001531">
    <property type="entry name" value="PRK00364.2-2"/>
    <property type="match status" value="1"/>
</dbReference>
<dbReference type="NCBIfam" id="NF001533">
    <property type="entry name" value="PRK00364.2-4"/>
    <property type="match status" value="1"/>
</dbReference>
<dbReference type="NCBIfam" id="NF001534">
    <property type="entry name" value="PRK00364.2-5"/>
    <property type="match status" value="1"/>
</dbReference>
<dbReference type="PANTHER" id="PTHR10772">
    <property type="entry name" value="10 KDA HEAT SHOCK PROTEIN"/>
    <property type="match status" value="1"/>
</dbReference>
<dbReference type="PANTHER" id="PTHR10772:SF58">
    <property type="entry name" value="CO-CHAPERONIN GROES"/>
    <property type="match status" value="1"/>
</dbReference>
<dbReference type="Pfam" id="PF00166">
    <property type="entry name" value="Cpn10"/>
    <property type="match status" value="1"/>
</dbReference>
<dbReference type="PRINTS" id="PR00297">
    <property type="entry name" value="CHAPERONIN10"/>
</dbReference>
<dbReference type="SMART" id="SM00883">
    <property type="entry name" value="Cpn10"/>
    <property type="match status" value="1"/>
</dbReference>
<dbReference type="SUPFAM" id="SSF50129">
    <property type="entry name" value="GroES-like"/>
    <property type="match status" value="1"/>
</dbReference>
<dbReference type="PROSITE" id="PS00681">
    <property type="entry name" value="CHAPERONINS_CPN10"/>
    <property type="match status" value="1"/>
</dbReference>
<sequence>MADIKFRPLHDRVVVRRVESEAKTAGGIIIPDTAKEKPQEGEVVAAGAGARDEAGKLVPLDVKAGDRVLFGKWSGTEVKIGGEDLLIMKESDILGIVG</sequence>
<proteinExistence type="evidence at transcript level"/>